<dbReference type="EMBL" id="CU928158">
    <property type="protein sequence ID" value="CAQ91271.1"/>
    <property type="molecule type" value="Genomic_DNA"/>
</dbReference>
<dbReference type="RefSeq" id="WP_000710769.1">
    <property type="nucleotide sequence ID" value="NC_011740.1"/>
</dbReference>
<dbReference type="SMR" id="B7LUR8"/>
<dbReference type="GeneID" id="93777962"/>
<dbReference type="KEGG" id="efe:EFER_3836"/>
<dbReference type="HOGENOM" id="CLU_114306_4_3_6"/>
<dbReference type="OrthoDB" id="9803251at2"/>
<dbReference type="Proteomes" id="UP000000745">
    <property type="component" value="Chromosome"/>
</dbReference>
<dbReference type="GO" id="GO:1990904">
    <property type="term" value="C:ribonucleoprotein complex"/>
    <property type="evidence" value="ECO:0007669"/>
    <property type="project" value="UniProtKB-KW"/>
</dbReference>
<dbReference type="GO" id="GO:0005840">
    <property type="term" value="C:ribosome"/>
    <property type="evidence" value="ECO:0007669"/>
    <property type="project" value="UniProtKB-KW"/>
</dbReference>
<dbReference type="GO" id="GO:0046872">
    <property type="term" value="F:metal ion binding"/>
    <property type="evidence" value="ECO:0007669"/>
    <property type="project" value="UniProtKB-KW"/>
</dbReference>
<dbReference type="GO" id="GO:0019843">
    <property type="term" value="F:rRNA binding"/>
    <property type="evidence" value="ECO:0007669"/>
    <property type="project" value="UniProtKB-KW"/>
</dbReference>
<dbReference type="GO" id="GO:0003735">
    <property type="term" value="F:structural constituent of ribosome"/>
    <property type="evidence" value="ECO:0007669"/>
    <property type="project" value="InterPro"/>
</dbReference>
<dbReference type="GO" id="GO:0006412">
    <property type="term" value="P:translation"/>
    <property type="evidence" value="ECO:0007669"/>
    <property type="project" value="UniProtKB-UniRule"/>
</dbReference>
<dbReference type="FunFam" id="4.10.830.30:FF:000001">
    <property type="entry name" value="50S ribosomal protein L31"/>
    <property type="match status" value="1"/>
</dbReference>
<dbReference type="Gene3D" id="4.10.830.30">
    <property type="entry name" value="Ribosomal protein L31"/>
    <property type="match status" value="1"/>
</dbReference>
<dbReference type="HAMAP" id="MF_00501">
    <property type="entry name" value="Ribosomal_bL31_1"/>
    <property type="match status" value="1"/>
</dbReference>
<dbReference type="InterPro" id="IPR034704">
    <property type="entry name" value="Ribosomal_bL28/bL31-like_sf"/>
</dbReference>
<dbReference type="InterPro" id="IPR002150">
    <property type="entry name" value="Ribosomal_bL31"/>
</dbReference>
<dbReference type="InterPro" id="IPR027491">
    <property type="entry name" value="Ribosomal_bL31_A"/>
</dbReference>
<dbReference type="InterPro" id="IPR042105">
    <property type="entry name" value="Ribosomal_bL31_sf"/>
</dbReference>
<dbReference type="NCBIfam" id="TIGR00105">
    <property type="entry name" value="L31"/>
    <property type="match status" value="1"/>
</dbReference>
<dbReference type="NCBIfam" id="NF000612">
    <property type="entry name" value="PRK00019.1"/>
    <property type="match status" value="1"/>
</dbReference>
<dbReference type="NCBIfam" id="NF001809">
    <property type="entry name" value="PRK00528.1"/>
    <property type="match status" value="1"/>
</dbReference>
<dbReference type="PANTHER" id="PTHR33280">
    <property type="entry name" value="50S RIBOSOMAL PROTEIN L31, CHLOROPLASTIC"/>
    <property type="match status" value="1"/>
</dbReference>
<dbReference type="PANTHER" id="PTHR33280:SF6">
    <property type="entry name" value="LARGE RIBOSOMAL SUBUNIT PROTEIN BL31A"/>
    <property type="match status" value="1"/>
</dbReference>
<dbReference type="Pfam" id="PF01197">
    <property type="entry name" value="Ribosomal_L31"/>
    <property type="match status" value="1"/>
</dbReference>
<dbReference type="PRINTS" id="PR01249">
    <property type="entry name" value="RIBOSOMALL31"/>
</dbReference>
<dbReference type="SUPFAM" id="SSF143800">
    <property type="entry name" value="L28p-like"/>
    <property type="match status" value="1"/>
</dbReference>
<dbReference type="PROSITE" id="PS01143">
    <property type="entry name" value="RIBOSOMAL_L31"/>
    <property type="match status" value="1"/>
</dbReference>
<feature type="chain" id="PRO_1000126626" description="Large ribosomal subunit protein bL31">
    <location>
        <begin position="1"/>
        <end position="70"/>
    </location>
</feature>
<feature type="binding site" evidence="1">
    <location>
        <position position="16"/>
    </location>
    <ligand>
        <name>Zn(2+)</name>
        <dbReference type="ChEBI" id="CHEBI:29105"/>
    </ligand>
</feature>
<feature type="binding site" evidence="1">
    <location>
        <position position="18"/>
    </location>
    <ligand>
        <name>Zn(2+)</name>
        <dbReference type="ChEBI" id="CHEBI:29105"/>
    </ligand>
</feature>
<feature type="binding site" evidence="1">
    <location>
        <position position="37"/>
    </location>
    <ligand>
        <name>Zn(2+)</name>
        <dbReference type="ChEBI" id="CHEBI:29105"/>
    </ligand>
</feature>
<feature type="binding site" evidence="1">
    <location>
        <position position="40"/>
    </location>
    <ligand>
        <name>Zn(2+)</name>
        <dbReference type="ChEBI" id="CHEBI:29105"/>
    </ligand>
</feature>
<feature type="modified residue" description="N6-acetyllysine" evidence="1">
    <location>
        <position position="8"/>
    </location>
</feature>
<comment type="function">
    <text evidence="1">Binds the 23S rRNA.</text>
</comment>
<comment type="cofactor">
    <cofactor evidence="1">
        <name>Zn(2+)</name>
        <dbReference type="ChEBI" id="CHEBI:29105"/>
    </cofactor>
    <text evidence="1">Binds 1 zinc ion per subunit.</text>
</comment>
<comment type="subunit">
    <text evidence="1">Part of the 50S ribosomal subunit.</text>
</comment>
<comment type="similarity">
    <text evidence="1">Belongs to the bacterial ribosomal protein bL31 family. Type A subfamily.</text>
</comment>
<evidence type="ECO:0000255" key="1">
    <source>
        <dbReference type="HAMAP-Rule" id="MF_00501"/>
    </source>
</evidence>
<evidence type="ECO:0000305" key="2"/>
<proteinExistence type="inferred from homology"/>
<organism>
    <name type="scientific">Escherichia fergusonii (strain ATCC 35469 / DSM 13698 / CCUG 18766 / IAM 14443 / JCM 21226 / LMG 7866 / NBRC 102419 / NCTC 12128 / CDC 0568-73)</name>
    <dbReference type="NCBI Taxonomy" id="585054"/>
    <lineage>
        <taxon>Bacteria</taxon>
        <taxon>Pseudomonadati</taxon>
        <taxon>Pseudomonadota</taxon>
        <taxon>Gammaproteobacteria</taxon>
        <taxon>Enterobacterales</taxon>
        <taxon>Enterobacteriaceae</taxon>
        <taxon>Escherichia</taxon>
    </lineage>
</organism>
<accession>B7LUR8</accession>
<keyword id="KW-0007">Acetylation</keyword>
<keyword id="KW-0479">Metal-binding</keyword>
<keyword id="KW-0687">Ribonucleoprotein</keyword>
<keyword id="KW-0689">Ribosomal protein</keyword>
<keyword id="KW-0694">RNA-binding</keyword>
<keyword id="KW-0699">rRNA-binding</keyword>
<keyword id="KW-0862">Zinc</keyword>
<protein>
    <recommendedName>
        <fullName evidence="1">Large ribosomal subunit protein bL31</fullName>
    </recommendedName>
    <alternativeName>
        <fullName evidence="2">50S ribosomal protein L31</fullName>
    </alternativeName>
</protein>
<reference key="1">
    <citation type="journal article" date="2009" name="PLoS Genet.">
        <title>Organised genome dynamics in the Escherichia coli species results in highly diverse adaptive paths.</title>
        <authorList>
            <person name="Touchon M."/>
            <person name="Hoede C."/>
            <person name="Tenaillon O."/>
            <person name="Barbe V."/>
            <person name="Baeriswyl S."/>
            <person name="Bidet P."/>
            <person name="Bingen E."/>
            <person name="Bonacorsi S."/>
            <person name="Bouchier C."/>
            <person name="Bouvet O."/>
            <person name="Calteau A."/>
            <person name="Chiapello H."/>
            <person name="Clermont O."/>
            <person name="Cruveiller S."/>
            <person name="Danchin A."/>
            <person name="Diard M."/>
            <person name="Dossat C."/>
            <person name="Karoui M.E."/>
            <person name="Frapy E."/>
            <person name="Garry L."/>
            <person name="Ghigo J.M."/>
            <person name="Gilles A.M."/>
            <person name="Johnson J."/>
            <person name="Le Bouguenec C."/>
            <person name="Lescat M."/>
            <person name="Mangenot S."/>
            <person name="Martinez-Jehanne V."/>
            <person name="Matic I."/>
            <person name="Nassif X."/>
            <person name="Oztas S."/>
            <person name="Petit M.A."/>
            <person name="Pichon C."/>
            <person name="Rouy Z."/>
            <person name="Ruf C.S."/>
            <person name="Schneider D."/>
            <person name="Tourret J."/>
            <person name="Vacherie B."/>
            <person name="Vallenet D."/>
            <person name="Medigue C."/>
            <person name="Rocha E.P.C."/>
            <person name="Denamur E."/>
        </authorList>
    </citation>
    <scope>NUCLEOTIDE SEQUENCE [LARGE SCALE GENOMIC DNA]</scope>
    <source>
        <strain>ATCC 35469 / DSM 13698 / BCRC 15582 / CCUG 18766 / IAM 14443 / JCM 21226 / LMG 7866 / NBRC 102419 / NCTC 12128 / CDC 0568-73</strain>
    </source>
</reference>
<gene>
    <name evidence="1" type="primary">rpmE</name>
    <name type="ordered locus">EFER_3836</name>
</gene>
<name>RL31_ESCF3</name>
<sequence length="70" mass="7871">MKKDIHPKYEEITASCSCGNVMKIRSTVGHDLNLDVCSKCHPFFTGKQRDVATGGRVDRFNKRFNIPGSK</sequence>